<organism>
    <name type="scientific">Wolbachia sp. subsp. Drosophila simulans (strain wRi)</name>
    <dbReference type="NCBI Taxonomy" id="66084"/>
    <lineage>
        <taxon>Bacteria</taxon>
        <taxon>Pseudomonadati</taxon>
        <taxon>Pseudomonadota</taxon>
        <taxon>Alphaproteobacteria</taxon>
        <taxon>Rickettsiales</taxon>
        <taxon>Anaplasmataceae</taxon>
        <taxon>Wolbachieae</taxon>
        <taxon>Wolbachia</taxon>
    </lineage>
</organism>
<name>DNAJ_WOLWR</name>
<feature type="chain" id="PRO_1000164285" description="Chaperone protein DnaJ">
    <location>
        <begin position="1"/>
        <end position="372"/>
    </location>
</feature>
<feature type="domain" description="J" evidence="1">
    <location>
        <begin position="5"/>
        <end position="70"/>
    </location>
</feature>
<feature type="repeat" description="CXXCXGXG motif">
    <location>
        <begin position="147"/>
        <end position="154"/>
    </location>
</feature>
<feature type="repeat" description="CXXCXGXG motif">
    <location>
        <begin position="164"/>
        <end position="171"/>
    </location>
</feature>
<feature type="repeat" description="CXXCXGXG motif">
    <location>
        <begin position="186"/>
        <end position="193"/>
    </location>
</feature>
<feature type="repeat" description="CXXCXGXG motif">
    <location>
        <begin position="200"/>
        <end position="207"/>
    </location>
</feature>
<feature type="zinc finger region" description="CR-type" evidence="1">
    <location>
        <begin position="134"/>
        <end position="212"/>
    </location>
</feature>
<feature type="binding site" evidence="1">
    <location>
        <position position="147"/>
    </location>
    <ligand>
        <name>Zn(2+)</name>
        <dbReference type="ChEBI" id="CHEBI:29105"/>
        <label>1</label>
    </ligand>
</feature>
<feature type="binding site" evidence="1">
    <location>
        <position position="150"/>
    </location>
    <ligand>
        <name>Zn(2+)</name>
        <dbReference type="ChEBI" id="CHEBI:29105"/>
        <label>1</label>
    </ligand>
</feature>
<feature type="binding site" evidence="1">
    <location>
        <position position="164"/>
    </location>
    <ligand>
        <name>Zn(2+)</name>
        <dbReference type="ChEBI" id="CHEBI:29105"/>
        <label>2</label>
    </ligand>
</feature>
<feature type="binding site" evidence="1">
    <location>
        <position position="167"/>
    </location>
    <ligand>
        <name>Zn(2+)</name>
        <dbReference type="ChEBI" id="CHEBI:29105"/>
        <label>2</label>
    </ligand>
</feature>
<feature type="binding site" evidence="1">
    <location>
        <position position="186"/>
    </location>
    <ligand>
        <name>Zn(2+)</name>
        <dbReference type="ChEBI" id="CHEBI:29105"/>
        <label>2</label>
    </ligand>
</feature>
<feature type="binding site" evidence="1">
    <location>
        <position position="189"/>
    </location>
    <ligand>
        <name>Zn(2+)</name>
        <dbReference type="ChEBI" id="CHEBI:29105"/>
        <label>2</label>
    </ligand>
</feature>
<feature type="binding site" evidence="1">
    <location>
        <position position="200"/>
    </location>
    <ligand>
        <name>Zn(2+)</name>
        <dbReference type="ChEBI" id="CHEBI:29105"/>
        <label>1</label>
    </ligand>
</feature>
<feature type="binding site" evidence="1">
    <location>
        <position position="203"/>
    </location>
    <ligand>
        <name>Zn(2+)</name>
        <dbReference type="ChEBI" id="CHEBI:29105"/>
        <label>1</label>
    </ligand>
</feature>
<proteinExistence type="inferred from homology"/>
<gene>
    <name evidence="1" type="primary">dnaJ</name>
    <name type="ordered locus">WRi_000340</name>
</gene>
<dbReference type="EMBL" id="CP001391">
    <property type="protein sequence ID" value="ACN94904.1"/>
    <property type="molecule type" value="Genomic_DNA"/>
</dbReference>
<dbReference type="RefSeq" id="WP_012673045.1">
    <property type="nucleotide sequence ID" value="NZ_MKIF01000138.1"/>
</dbReference>
<dbReference type="SMR" id="C0R562"/>
<dbReference type="STRING" id="66084.WRi_000340"/>
<dbReference type="KEGG" id="wri:WRi_000340"/>
<dbReference type="HOGENOM" id="CLU_017633_0_7_5"/>
<dbReference type="Proteomes" id="UP000001293">
    <property type="component" value="Chromosome"/>
</dbReference>
<dbReference type="GO" id="GO:0005737">
    <property type="term" value="C:cytoplasm"/>
    <property type="evidence" value="ECO:0007669"/>
    <property type="project" value="UniProtKB-SubCell"/>
</dbReference>
<dbReference type="GO" id="GO:0005524">
    <property type="term" value="F:ATP binding"/>
    <property type="evidence" value="ECO:0007669"/>
    <property type="project" value="InterPro"/>
</dbReference>
<dbReference type="GO" id="GO:0031072">
    <property type="term" value="F:heat shock protein binding"/>
    <property type="evidence" value="ECO:0007669"/>
    <property type="project" value="InterPro"/>
</dbReference>
<dbReference type="GO" id="GO:0051082">
    <property type="term" value="F:unfolded protein binding"/>
    <property type="evidence" value="ECO:0007669"/>
    <property type="project" value="UniProtKB-UniRule"/>
</dbReference>
<dbReference type="GO" id="GO:0008270">
    <property type="term" value="F:zinc ion binding"/>
    <property type="evidence" value="ECO:0007669"/>
    <property type="project" value="UniProtKB-UniRule"/>
</dbReference>
<dbReference type="GO" id="GO:0051085">
    <property type="term" value="P:chaperone cofactor-dependent protein refolding"/>
    <property type="evidence" value="ECO:0007669"/>
    <property type="project" value="TreeGrafter"/>
</dbReference>
<dbReference type="GO" id="GO:0006260">
    <property type="term" value="P:DNA replication"/>
    <property type="evidence" value="ECO:0007669"/>
    <property type="project" value="UniProtKB-KW"/>
</dbReference>
<dbReference type="GO" id="GO:0042026">
    <property type="term" value="P:protein refolding"/>
    <property type="evidence" value="ECO:0007669"/>
    <property type="project" value="TreeGrafter"/>
</dbReference>
<dbReference type="GO" id="GO:0009408">
    <property type="term" value="P:response to heat"/>
    <property type="evidence" value="ECO:0007669"/>
    <property type="project" value="InterPro"/>
</dbReference>
<dbReference type="CDD" id="cd06257">
    <property type="entry name" value="DnaJ"/>
    <property type="match status" value="1"/>
</dbReference>
<dbReference type="CDD" id="cd10747">
    <property type="entry name" value="DnaJ_C"/>
    <property type="match status" value="1"/>
</dbReference>
<dbReference type="CDD" id="cd10719">
    <property type="entry name" value="DnaJ_zf"/>
    <property type="match status" value="1"/>
</dbReference>
<dbReference type="FunFam" id="1.10.287.110:FF:000034">
    <property type="entry name" value="Chaperone protein DnaJ"/>
    <property type="match status" value="1"/>
</dbReference>
<dbReference type="FunFam" id="2.60.260.20:FF:000005">
    <property type="entry name" value="Chaperone protein dnaJ 1, mitochondrial"/>
    <property type="match status" value="1"/>
</dbReference>
<dbReference type="FunFam" id="2.10.230.10:FF:000002">
    <property type="entry name" value="Molecular chaperone DnaJ"/>
    <property type="match status" value="1"/>
</dbReference>
<dbReference type="Gene3D" id="1.10.287.110">
    <property type="entry name" value="DnaJ domain"/>
    <property type="match status" value="1"/>
</dbReference>
<dbReference type="Gene3D" id="2.10.230.10">
    <property type="entry name" value="Heat shock protein DnaJ, cysteine-rich domain"/>
    <property type="match status" value="1"/>
</dbReference>
<dbReference type="Gene3D" id="2.60.260.20">
    <property type="entry name" value="Urease metallochaperone UreE, N-terminal domain"/>
    <property type="match status" value="2"/>
</dbReference>
<dbReference type="HAMAP" id="MF_01152">
    <property type="entry name" value="DnaJ"/>
    <property type="match status" value="1"/>
</dbReference>
<dbReference type="InterPro" id="IPR012724">
    <property type="entry name" value="DnaJ"/>
</dbReference>
<dbReference type="InterPro" id="IPR002939">
    <property type="entry name" value="DnaJ_C"/>
</dbReference>
<dbReference type="InterPro" id="IPR001623">
    <property type="entry name" value="DnaJ_domain"/>
</dbReference>
<dbReference type="InterPro" id="IPR018253">
    <property type="entry name" value="DnaJ_domain_CS"/>
</dbReference>
<dbReference type="InterPro" id="IPR008971">
    <property type="entry name" value="HSP40/DnaJ_pept-bd"/>
</dbReference>
<dbReference type="InterPro" id="IPR001305">
    <property type="entry name" value="HSP_DnaJ_Cys-rich_dom"/>
</dbReference>
<dbReference type="InterPro" id="IPR036410">
    <property type="entry name" value="HSP_DnaJ_Cys-rich_dom_sf"/>
</dbReference>
<dbReference type="InterPro" id="IPR036869">
    <property type="entry name" value="J_dom_sf"/>
</dbReference>
<dbReference type="NCBIfam" id="TIGR02349">
    <property type="entry name" value="DnaJ_bact"/>
    <property type="match status" value="1"/>
</dbReference>
<dbReference type="NCBIfam" id="NF008035">
    <property type="entry name" value="PRK10767.1"/>
    <property type="match status" value="1"/>
</dbReference>
<dbReference type="PANTHER" id="PTHR43096:SF48">
    <property type="entry name" value="CHAPERONE PROTEIN DNAJ"/>
    <property type="match status" value="1"/>
</dbReference>
<dbReference type="PANTHER" id="PTHR43096">
    <property type="entry name" value="DNAJ HOMOLOG 1, MITOCHONDRIAL-RELATED"/>
    <property type="match status" value="1"/>
</dbReference>
<dbReference type="Pfam" id="PF00226">
    <property type="entry name" value="DnaJ"/>
    <property type="match status" value="1"/>
</dbReference>
<dbReference type="Pfam" id="PF01556">
    <property type="entry name" value="DnaJ_C"/>
    <property type="match status" value="1"/>
</dbReference>
<dbReference type="Pfam" id="PF00684">
    <property type="entry name" value="DnaJ_CXXCXGXG"/>
    <property type="match status" value="1"/>
</dbReference>
<dbReference type="PRINTS" id="PR00625">
    <property type="entry name" value="JDOMAIN"/>
</dbReference>
<dbReference type="SMART" id="SM00271">
    <property type="entry name" value="DnaJ"/>
    <property type="match status" value="1"/>
</dbReference>
<dbReference type="SUPFAM" id="SSF46565">
    <property type="entry name" value="Chaperone J-domain"/>
    <property type="match status" value="1"/>
</dbReference>
<dbReference type="SUPFAM" id="SSF57938">
    <property type="entry name" value="DnaJ/Hsp40 cysteine-rich domain"/>
    <property type="match status" value="1"/>
</dbReference>
<dbReference type="SUPFAM" id="SSF49493">
    <property type="entry name" value="HSP40/DnaJ peptide-binding domain"/>
    <property type="match status" value="2"/>
</dbReference>
<dbReference type="PROSITE" id="PS00636">
    <property type="entry name" value="DNAJ_1"/>
    <property type="match status" value="1"/>
</dbReference>
<dbReference type="PROSITE" id="PS50076">
    <property type="entry name" value="DNAJ_2"/>
    <property type="match status" value="1"/>
</dbReference>
<dbReference type="PROSITE" id="PS51188">
    <property type="entry name" value="ZF_CR"/>
    <property type="match status" value="1"/>
</dbReference>
<comment type="function">
    <text evidence="1">Participates actively in the response to hyperosmotic and heat shock by preventing the aggregation of stress-denatured proteins and by disaggregating proteins, also in an autonomous, DnaK-independent fashion. Unfolded proteins bind initially to DnaJ; upon interaction with the DnaJ-bound protein, DnaK hydrolyzes its bound ATP, resulting in the formation of a stable complex. GrpE releases ADP from DnaK; ATP binding to DnaK triggers the release of the substrate protein, thus completing the reaction cycle. Several rounds of ATP-dependent interactions between DnaJ, DnaK and GrpE are required for fully efficient folding. Also involved, together with DnaK and GrpE, in the DNA replication of plasmids through activation of initiation proteins.</text>
</comment>
<comment type="cofactor">
    <cofactor evidence="1">
        <name>Zn(2+)</name>
        <dbReference type="ChEBI" id="CHEBI:29105"/>
    </cofactor>
    <text evidence="1">Binds 2 Zn(2+) ions per monomer.</text>
</comment>
<comment type="subunit">
    <text evidence="1">Homodimer.</text>
</comment>
<comment type="subcellular location">
    <subcellularLocation>
        <location evidence="1">Cytoplasm</location>
    </subcellularLocation>
</comment>
<comment type="domain">
    <text evidence="1">The J domain is necessary and sufficient to stimulate DnaK ATPase activity. Zinc center 1 plays an important role in the autonomous, DnaK-independent chaperone activity of DnaJ. Zinc center 2 is essential for interaction with DnaK and for DnaJ activity.</text>
</comment>
<comment type="similarity">
    <text evidence="1">Belongs to the DnaJ family.</text>
</comment>
<protein>
    <recommendedName>
        <fullName evidence="1">Chaperone protein DnaJ</fullName>
    </recommendedName>
</protein>
<sequence>MSKKDYYDLLEVGRNASIDEIKKAYKKLALKYHPDRNPGNQEAEEKFKEVTAAYEVLSDSEKRAGYDRYGHEGASGGFQGFSSAGDFSDIFNDFFGGGFGGGASRSRAKRSTTGVSGADLRYDLEITLEDAFKGIQAPIHYVTNVKCDTCQGTGGEGAIKPVQCHTCQGSGRIRTQQGFFTIERTCTTCYGEGEIIQNKCKKCGGSGRRRDEVNISVSIPKGIEEGAKVRISGKGEAGTKGGKSGDLYVYVKIIFHKIFARNKADLHCKVPIRMTLAVLGGEIDIQSIDGAKIKVKVPEGTQTGTKLRCREKGMPYMNSHARGDLYVQVIVETLNPKNLTKKQIELLKALEEEENASVQQQSEGFFSKVKKK</sequence>
<evidence type="ECO:0000255" key="1">
    <source>
        <dbReference type="HAMAP-Rule" id="MF_01152"/>
    </source>
</evidence>
<reference key="1">
    <citation type="journal article" date="2009" name="Proc. Natl. Acad. Sci. U.S.A.">
        <title>The mosaic genome structure of the Wolbachia wRi strain infecting Drosophila simulans.</title>
        <authorList>
            <person name="Klasson L."/>
            <person name="Westberg J."/>
            <person name="Sapountzis P."/>
            <person name="Naeslund K."/>
            <person name="Lutnaes Y."/>
            <person name="Darby A.C."/>
            <person name="Veneti Z."/>
            <person name="Chen L."/>
            <person name="Braig H.R."/>
            <person name="Garrett R."/>
            <person name="Bourtzis K."/>
            <person name="Andersson S.G."/>
        </authorList>
    </citation>
    <scope>NUCLEOTIDE SEQUENCE [LARGE SCALE GENOMIC DNA]</scope>
    <source>
        <strain>wRi</strain>
    </source>
</reference>
<keyword id="KW-0143">Chaperone</keyword>
<keyword id="KW-0963">Cytoplasm</keyword>
<keyword id="KW-0235">DNA replication</keyword>
<keyword id="KW-0479">Metal-binding</keyword>
<keyword id="KW-0677">Repeat</keyword>
<keyword id="KW-0346">Stress response</keyword>
<keyword id="KW-0862">Zinc</keyword>
<keyword id="KW-0863">Zinc-finger</keyword>
<accession>C0R562</accession>